<proteinExistence type="inferred from homology"/>
<reference key="1">
    <citation type="journal article" date="2009" name="PLoS Biol.">
        <title>Lineage-specific biology revealed by a finished genome assembly of the mouse.</title>
        <authorList>
            <person name="Church D.M."/>
            <person name="Goodstadt L."/>
            <person name="Hillier L.W."/>
            <person name="Zody M.C."/>
            <person name="Goldstein S."/>
            <person name="She X."/>
            <person name="Bult C.J."/>
            <person name="Agarwala R."/>
            <person name="Cherry J.L."/>
            <person name="DiCuccio M."/>
            <person name="Hlavina W."/>
            <person name="Kapustin Y."/>
            <person name="Meric P."/>
            <person name="Maglott D."/>
            <person name="Birtle Z."/>
            <person name="Marques A.C."/>
            <person name="Graves T."/>
            <person name="Zhou S."/>
            <person name="Teague B."/>
            <person name="Potamousis K."/>
            <person name="Churas C."/>
            <person name="Place M."/>
            <person name="Herschleb J."/>
            <person name="Runnheim R."/>
            <person name="Forrest D."/>
            <person name="Amos-Landgraf J."/>
            <person name="Schwartz D.C."/>
            <person name="Cheng Z."/>
            <person name="Lindblad-Toh K."/>
            <person name="Eichler E.E."/>
            <person name="Ponting C.P."/>
        </authorList>
    </citation>
    <scope>NUCLEOTIDE SEQUENCE [LARGE SCALE GENOMIC DNA]</scope>
    <source>
        <strain>C57BL/6J</strain>
    </source>
</reference>
<reference key="2">
    <citation type="journal article" date="2021" name="Cell. Mol. Immunol.">
        <title>TRIM34 attenuates colon inflammation and tumorigenesis by sustaining barrier integrity.</title>
        <authorList>
            <person name="Lian Q."/>
            <person name="Yan S."/>
            <person name="Yin Q."/>
            <person name="Yan C."/>
            <person name="Zheng W."/>
            <person name="Gu W."/>
            <person name="Zhao X."/>
            <person name="Fan W."/>
            <person name="Li X."/>
            <person name="Ma L."/>
            <person name="Ling Z."/>
            <person name="Zhang Y."/>
            <person name="Liu J."/>
            <person name="Li J."/>
            <person name="Sun B."/>
        </authorList>
    </citation>
    <scope>DISRUPTION PHENOTYPE</scope>
    <scope>FUNCTION</scope>
</reference>
<dbReference type="EC" id="2.3.2.27" evidence="1"/>
<dbReference type="EMBL" id="AC142110">
    <property type="status" value="NOT_ANNOTATED_CDS"/>
    <property type="molecule type" value="Genomic_DNA"/>
</dbReference>
<dbReference type="CCDS" id="CCDS57570.1"/>
<dbReference type="RefSeq" id="NP_001230845.1">
    <property type="nucleotide sequence ID" value="NM_001243916.1"/>
</dbReference>
<dbReference type="SMR" id="K7N6K2"/>
<dbReference type="FunCoup" id="K7N6K2">
    <property type="interactions" value="213"/>
</dbReference>
<dbReference type="STRING" id="10090.ENSMUSP00000102460"/>
<dbReference type="jPOST" id="K7N6K2"/>
<dbReference type="PaxDb" id="10090-ENSMUSP00000102460"/>
<dbReference type="Ensembl" id="ENSMUST00000106847.9">
    <property type="protein sequence ID" value="ENSMUSP00000102460.2"/>
    <property type="gene ID" value="ENSMUSG00000090215.11"/>
</dbReference>
<dbReference type="GeneID" id="434218"/>
<dbReference type="KEGG" id="mmu:434218"/>
<dbReference type="UCSC" id="uc012frg.2">
    <property type="organism name" value="mouse"/>
</dbReference>
<dbReference type="AGR" id="MGI:4821264"/>
<dbReference type="CTD" id="434218"/>
<dbReference type="MGI" id="MGI:4821264">
    <property type="gene designation" value="Trim34b"/>
</dbReference>
<dbReference type="VEuPathDB" id="HostDB:ENSMUSG00000090215"/>
<dbReference type="eggNOG" id="KOG2177">
    <property type="taxonomic scope" value="Eukaryota"/>
</dbReference>
<dbReference type="GeneTree" id="ENSGT00940000162320"/>
<dbReference type="HOGENOM" id="CLU_013137_0_3_1"/>
<dbReference type="OrthoDB" id="264917at2759"/>
<dbReference type="PhylomeDB" id="K7N6K2"/>
<dbReference type="TreeFam" id="TF338674"/>
<dbReference type="UniPathway" id="UPA00143"/>
<dbReference type="BioGRID-ORCS" id="434218">
    <property type="hits" value="0 hits in 47 CRISPR screens"/>
</dbReference>
<dbReference type="PRO" id="PR:K7N6K2"/>
<dbReference type="Proteomes" id="UP000000589">
    <property type="component" value="Chromosome 7"/>
</dbReference>
<dbReference type="Bgee" id="ENSMUSG00000090215">
    <property type="expression patterns" value="Expressed in ureter and 38 other cell types or tissues"/>
</dbReference>
<dbReference type="ExpressionAtlas" id="K7N6K2">
    <property type="expression patterns" value="baseline and differential"/>
</dbReference>
<dbReference type="GO" id="GO:0005739">
    <property type="term" value="C:mitochondrion"/>
    <property type="evidence" value="ECO:0007669"/>
    <property type="project" value="UniProtKB-SubCell"/>
</dbReference>
<dbReference type="GO" id="GO:0016740">
    <property type="term" value="F:transferase activity"/>
    <property type="evidence" value="ECO:0007669"/>
    <property type="project" value="UniProtKB-KW"/>
</dbReference>
<dbReference type="GO" id="GO:0008270">
    <property type="term" value="F:zinc ion binding"/>
    <property type="evidence" value="ECO:0007669"/>
    <property type="project" value="UniProtKB-KW"/>
</dbReference>
<dbReference type="GO" id="GO:0051607">
    <property type="term" value="P:defense response to virus"/>
    <property type="evidence" value="ECO:0007669"/>
    <property type="project" value="UniProtKB-KW"/>
</dbReference>
<dbReference type="GO" id="GO:0016567">
    <property type="term" value="P:protein ubiquitination"/>
    <property type="evidence" value="ECO:0007669"/>
    <property type="project" value="UniProtKB-UniPathway"/>
</dbReference>
<dbReference type="CDD" id="cd19761">
    <property type="entry name" value="Bbox2_TRIM5-like"/>
    <property type="match status" value="1"/>
</dbReference>
<dbReference type="CDD" id="cd16591">
    <property type="entry name" value="RING-HC_TRIM5-like_C-IV"/>
    <property type="match status" value="1"/>
</dbReference>
<dbReference type="CDD" id="cd15825">
    <property type="entry name" value="SPRY_PRY_TRIM34"/>
    <property type="match status" value="1"/>
</dbReference>
<dbReference type="FunFam" id="3.30.160.60:FF:000386">
    <property type="entry name" value="Tripartite motif-containing 5 (Predicted)"/>
    <property type="match status" value="1"/>
</dbReference>
<dbReference type="Gene3D" id="2.60.120.920">
    <property type="match status" value="1"/>
</dbReference>
<dbReference type="Gene3D" id="3.30.160.60">
    <property type="entry name" value="Classic Zinc Finger"/>
    <property type="match status" value="1"/>
</dbReference>
<dbReference type="Gene3D" id="3.30.40.10">
    <property type="entry name" value="Zinc/RING finger domain, C3HC4 (zinc finger)"/>
    <property type="match status" value="1"/>
</dbReference>
<dbReference type="InterPro" id="IPR001870">
    <property type="entry name" value="B30.2/SPRY"/>
</dbReference>
<dbReference type="InterPro" id="IPR043136">
    <property type="entry name" value="B30.2/SPRY_sf"/>
</dbReference>
<dbReference type="InterPro" id="IPR003879">
    <property type="entry name" value="Butyrophylin_SPRY"/>
</dbReference>
<dbReference type="InterPro" id="IPR013320">
    <property type="entry name" value="ConA-like_dom_sf"/>
</dbReference>
<dbReference type="InterPro" id="IPR003877">
    <property type="entry name" value="SPRY_dom"/>
</dbReference>
<dbReference type="InterPro" id="IPR050143">
    <property type="entry name" value="TRIM/RBCC"/>
</dbReference>
<dbReference type="InterPro" id="IPR035826">
    <property type="entry name" value="TRIM34_PRY/SPRY"/>
</dbReference>
<dbReference type="InterPro" id="IPR027370">
    <property type="entry name" value="Znf-RING_euk"/>
</dbReference>
<dbReference type="InterPro" id="IPR000315">
    <property type="entry name" value="Znf_B-box"/>
</dbReference>
<dbReference type="InterPro" id="IPR001841">
    <property type="entry name" value="Znf_RING"/>
</dbReference>
<dbReference type="InterPro" id="IPR013083">
    <property type="entry name" value="Znf_RING/FYVE/PHD"/>
</dbReference>
<dbReference type="InterPro" id="IPR017907">
    <property type="entry name" value="Znf_RING_CS"/>
</dbReference>
<dbReference type="PANTHER" id="PTHR24103">
    <property type="entry name" value="E3 UBIQUITIN-PROTEIN LIGASE TRIM"/>
    <property type="match status" value="1"/>
</dbReference>
<dbReference type="Pfam" id="PF00622">
    <property type="entry name" value="SPRY"/>
    <property type="match status" value="1"/>
</dbReference>
<dbReference type="Pfam" id="PF00643">
    <property type="entry name" value="zf-B_box"/>
    <property type="match status" value="1"/>
</dbReference>
<dbReference type="Pfam" id="PF13445">
    <property type="entry name" value="zf-RING_UBOX"/>
    <property type="match status" value="1"/>
</dbReference>
<dbReference type="PRINTS" id="PR01407">
    <property type="entry name" value="BUTYPHLNCDUF"/>
</dbReference>
<dbReference type="SMART" id="SM00336">
    <property type="entry name" value="BBOX"/>
    <property type="match status" value="1"/>
</dbReference>
<dbReference type="SMART" id="SM00184">
    <property type="entry name" value="RING"/>
    <property type="match status" value="1"/>
</dbReference>
<dbReference type="SMART" id="SM00449">
    <property type="entry name" value="SPRY"/>
    <property type="match status" value="1"/>
</dbReference>
<dbReference type="SUPFAM" id="SSF57845">
    <property type="entry name" value="B-box zinc-binding domain"/>
    <property type="match status" value="1"/>
</dbReference>
<dbReference type="SUPFAM" id="SSF49899">
    <property type="entry name" value="Concanavalin A-like lectins/glucanases"/>
    <property type="match status" value="1"/>
</dbReference>
<dbReference type="SUPFAM" id="SSF57850">
    <property type="entry name" value="RING/U-box"/>
    <property type="match status" value="1"/>
</dbReference>
<dbReference type="PROSITE" id="PS50188">
    <property type="entry name" value="B302_SPRY"/>
    <property type="match status" value="1"/>
</dbReference>
<dbReference type="PROSITE" id="PS50119">
    <property type="entry name" value="ZF_BBOX"/>
    <property type="match status" value="1"/>
</dbReference>
<dbReference type="PROSITE" id="PS00518">
    <property type="entry name" value="ZF_RING_1"/>
    <property type="match status" value="1"/>
</dbReference>
<dbReference type="PROSITE" id="PS50089">
    <property type="entry name" value="ZF_RING_2"/>
    <property type="match status" value="1"/>
</dbReference>
<feature type="chain" id="PRO_0000457054" description="E3 ubiquitin-protein ligase TRIM34B">
    <location>
        <begin position="1"/>
        <end position="485"/>
    </location>
</feature>
<feature type="domain" description="B30.2/SPRY" evidence="5">
    <location>
        <begin position="282"/>
        <end position="485"/>
    </location>
</feature>
<feature type="zinc finger region" description="RING-type" evidence="4">
    <location>
        <begin position="15"/>
        <end position="58"/>
    </location>
</feature>
<feature type="zinc finger region" description="B box-type" evidence="3">
    <location>
        <begin position="91"/>
        <end position="127"/>
    </location>
</feature>
<feature type="coiled-coil region" evidence="2">
    <location>
        <begin position="136"/>
        <end position="170"/>
    </location>
</feature>
<feature type="binding site" evidence="3">
    <location>
        <position position="96"/>
    </location>
    <ligand>
        <name>Zn(2+)</name>
        <dbReference type="ChEBI" id="CHEBI:29105"/>
    </ligand>
</feature>
<feature type="binding site" evidence="3">
    <location>
        <position position="99"/>
    </location>
    <ligand>
        <name>Zn(2+)</name>
        <dbReference type="ChEBI" id="CHEBI:29105"/>
    </ligand>
</feature>
<feature type="binding site" evidence="3">
    <location>
        <position position="118"/>
    </location>
    <ligand>
        <name>Zn(2+)</name>
        <dbReference type="ChEBI" id="CHEBI:29105"/>
    </ligand>
</feature>
<feature type="binding site" evidence="3">
    <location>
        <position position="124"/>
    </location>
    <ligand>
        <name>Zn(2+)</name>
        <dbReference type="ChEBI" id="CHEBI:29105"/>
    </ligand>
</feature>
<protein>
    <recommendedName>
        <fullName evidence="7">E3 ubiquitin-protein ligase TRIM34B</fullName>
        <ecNumber evidence="1">2.3.2.27</ecNumber>
    </recommendedName>
    <alternativeName>
        <fullName evidence="8">Tripartite motif-containing protein 34B</fullName>
    </alternativeName>
</protein>
<accession>K7N6K2</accession>
<evidence type="ECO:0000250" key="1">
    <source>
        <dbReference type="UniProtKB" id="Q9BYJ4"/>
    </source>
</evidence>
<evidence type="ECO:0000255" key="2"/>
<evidence type="ECO:0000255" key="3">
    <source>
        <dbReference type="PROSITE-ProRule" id="PRU00024"/>
    </source>
</evidence>
<evidence type="ECO:0000255" key="4">
    <source>
        <dbReference type="PROSITE-ProRule" id="PRU00175"/>
    </source>
</evidence>
<evidence type="ECO:0000255" key="5">
    <source>
        <dbReference type="PROSITE-ProRule" id="PRU00548"/>
    </source>
</evidence>
<evidence type="ECO:0000269" key="6">
    <source>
    </source>
</evidence>
<evidence type="ECO:0000305" key="7"/>
<evidence type="ECO:0000312" key="8">
    <source>
        <dbReference type="MGI" id="MGI:4821264"/>
    </source>
</evidence>
<comment type="function">
    <text evidence="1 6">Functions as antiviral protein and contributes to the defense against retroviral infections (By similarity). Acts as a capsid-specific restriction factor with the help of TRIM5 and prevents infection from non-host-adapted retroviruses. During influenza A virus infection, promotes programmed cell death by targeting ZBP1 for 'Lys-63'-linked polyubiquitination. In turn, promotes ZBP1 recruitment of RIPK3 to mediate virus-induced programmed necrosis (By similarity). Negatively regulates the function of mitochondria by enhancing mitochondrial depolarization leading to cytochrome c release and mitochondria-dependent apoptosis. Also promotes the formation of multinucleated giant cells by means of cell fusion and phagocytosis in epithelial cells (By similarity). Regulates intestinal inflammation by controlling the exocytosis of the major component of colonic mucus MUC2 from colonic goblet cells (PubMed:32094504).</text>
</comment>
<comment type="catalytic activity">
    <reaction evidence="1">
        <text>S-ubiquitinyl-[E2 ubiquitin-conjugating enzyme]-L-cysteine + [acceptor protein]-L-lysine = [E2 ubiquitin-conjugating enzyme]-L-cysteine + N(6)-ubiquitinyl-[acceptor protein]-L-lysine.</text>
        <dbReference type="EC" id="2.3.2.27"/>
    </reaction>
</comment>
<comment type="pathway">
    <text evidence="1">Protein modification; protein ubiquitination.</text>
</comment>
<comment type="subunit">
    <text evidence="1">Homotrimer. Interacts (via B-box and SPRY domain) with TRIM5.</text>
</comment>
<comment type="subcellular location">
    <subcellularLocation>
        <location evidence="1">Cytoplasm</location>
    </subcellularLocation>
    <subcellularLocation>
        <location evidence="1">Mitochondrion</location>
    </subcellularLocation>
</comment>
<comment type="disruption phenotype">
    <text evidence="6">Trim34a- and TRIM34b-deficient mice show an impaired integrity of the inner mucus layer.</text>
</comment>
<comment type="similarity">
    <text evidence="7">Belongs to the TRIM/RBCC family.</text>
</comment>
<gene>
    <name evidence="8" type="primary">Trim34b</name>
</gene>
<name>TR34B_MOUSE</name>
<organism>
    <name type="scientific">Mus musculus</name>
    <name type="common">Mouse</name>
    <dbReference type="NCBI Taxonomy" id="10090"/>
    <lineage>
        <taxon>Eukaryota</taxon>
        <taxon>Metazoa</taxon>
        <taxon>Chordata</taxon>
        <taxon>Craniata</taxon>
        <taxon>Vertebrata</taxon>
        <taxon>Euteleostomi</taxon>
        <taxon>Mammalia</taxon>
        <taxon>Eutheria</taxon>
        <taxon>Euarchontoglires</taxon>
        <taxon>Glires</taxon>
        <taxon>Rodentia</taxon>
        <taxon>Myomorpha</taxon>
        <taxon>Muroidea</taxon>
        <taxon>Muridae</taxon>
        <taxon>Murinae</taxon>
        <taxon>Mus</taxon>
        <taxon>Mus</taxon>
    </lineage>
</organism>
<keyword id="KW-0051">Antiviral defense</keyword>
<keyword id="KW-0175">Coiled coil</keyword>
<keyword id="KW-0963">Cytoplasm</keyword>
<keyword id="KW-0479">Metal-binding</keyword>
<keyword id="KW-0496">Mitochondrion</keyword>
<keyword id="KW-1185">Reference proteome</keyword>
<keyword id="KW-0808">Transferase</keyword>
<keyword id="KW-0862">Zinc</keyword>
<keyword id="KW-0863">Zinc-finger</keyword>
<sequence length="485" mass="55858">MASTGPTNIQEKTTCPVCQELLTKALSLGCGHLVCQACLISNKNAVINPRGKSSCPVCGTRFSLENLQANKHLANVVERLGEVKLKPDIGTKRDLCVHHGEKLLLFCKEDKKVICWVCERSQEHRGHHTFLWEEAVRECQENLQKALTRLRKEQEKVETLEADIKEDRLSWKRQVQTERQRIQTGFNQLRRILDKEEQRELKRLREEEQMILDSLAGAEAELAQQSQLVEELISDLELRREWSDTELLQDMSGILKWSQIWTLKKPKAVSKKLSMVFQAPDLSGMLQKFRELSAVRAYWDNFTFNPENLNLNLILSEDHRQVTSVSIWPFKCCNNGILGSKCFSSGKHYWEVDVSEKNAWTLGVYTRKRTLRFDVRQRKGQPNGYHRYKPQNGYWVIGLQHGSKYSIFEDSSNCDPTVLNPFVATPLHRVGIFLDCEEGTVSFLNVTNHGSLIYKFSQCCFSQPAYPYFNPWDCPAPMTLCPLNS</sequence>